<protein>
    <recommendedName>
        <fullName evidence="1">Urease accessory protein UreD</fullName>
    </recommendedName>
</protein>
<evidence type="ECO:0000255" key="1">
    <source>
        <dbReference type="HAMAP-Rule" id="MF_01384"/>
    </source>
</evidence>
<evidence type="ECO:0000305" key="2"/>
<reference key="1">
    <citation type="journal article" date="2004" name="Nat. Biotechnol.">
        <title>Complete genome sequence of the metabolically versatile photosynthetic bacterium Rhodopseudomonas palustris.</title>
        <authorList>
            <person name="Larimer F.W."/>
            <person name="Chain P."/>
            <person name="Hauser L."/>
            <person name="Lamerdin J.E."/>
            <person name="Malfatti S."/>
            <person name="Do L."/>
            <person name="Land M.L."/>
            <person name="Pelletier D.A."/>
            <person name="Beatty J.T."/>
            <person name="Lang A.S."/>
            <person name="Tabita F.R."/>
            <person name="Gibson J.L."/>
            <person name="Hanson T.E."/>
            <person name="Bobst C."/>
            <person name="Torres y Torres J.L."/>
            <person name="Peres C."/>
            <person name="Harrison F.H."/>
            <person name="Gibson J."/>
            <person name="Harwood C.S."/>
        </authorList>
    </citation>
    <scope>NUCLEOTIDE SEQUENCE [LARGE SCALE GENOMIC DNA]</scope>
    <source>
        <strain>ATCC BAA-98 / CGA009</strain>
    </source>
</reference>
<accession>Q6N3M9</accession>
<gene>
    <name evidence="1" type="primary">ureD</name>
    <name type="ordered locus">RPA3664</name>
</gene>
<sequence length="279" mass="29749">MMATDTSLTTSQTFAANRAVGEVAVEVRADGGVTRRGPVHEAGSLRVRFPSPEQQGLSAVLVNTAGGVAGGDRFSISLDVQAHARLTLTTAAAEKVYRTHGPAAQLDIKLKVASGGHLAWLPQETILFDQARAERRIDIELADDASLLLSEMVIFGRSAMGETMQHGRFVDRWRMRRGGKLVFAETVRLDGDIASLFGRPAVLNGGVAIGTALIVPGDAALVERLREAADTFGAEVGISAWNGFAMARFCAQNAARLRADMMTILGRAAGRALPRLWLS</sequence>
<name>URED_RHOPA</name>
<keyword id="KW-0143">Chaperone</keyword>
<keyword id="KW-0963">Cytoplasm</keyword>
<keyword id="KW-0996">Nickel insertion</keyword>
<organism>
    <name type="scientific">Rhodopseudomonas palustris (strain ATCC BAA-98 / CGA009)</name>
    <dbReference type="NCBI Taxonomy" id="258594"/>
    <lineage>
        <taxon>Bacteria</taxon>
        <taxon>Pseudomonadati</taxon>
        <taxon>Pseudomonadota</taxon>
        <taxon>Alphaproteobacteria</taxon>
        <taxon>Hyphomicrobiales</taxon>
        <taxon>Nitrobacteraceae</taxon>
        <taxon>Rhodopseudomonas</taxon>
    </lineage>
</organism>
<proteinExistence type="inferred from homology"/>
<dbReference type="EMBL" id="BX572604">
    <property type="protein sequence ID" value="CAE29105.1"/>
    <property type="status" value="ALT_INIT"/>
    <property type="molecule type" value="Genomic_DNA"/>
</dbReference>
<dbReference type="SMR" id="Q6N3M9"/>
<dbReference type="STRING" id="258594.RPA3664"/>
<dbReference type="eggNOG" id="COG0829">
    <property type="taxonomic scope" value="Bacteria"/>
</dbReference>
<dbReference type="HOGENOM" id="CLU_056339_2_0_5"/>
<dbReference type="GO" id="GO:0005737">
    <property type="term" value="C:cytoplasm"/>
    <property type="evidence" value="ECO:0007669"/>
    <property type="project" value="UniProtKB-SubCell"/>
</dbReference>
<dbReference type="GO" id="GO:0016151">
    <property type="term" value="F:nickel cation binding"/>
    <property type="evidence" value="ECO:0007669"/>
    <property type="project" value="UniProtKB-UniRule"/>
</dbReference>
<dbReference type="HAMAP" id="MF_01384">
    <property type="entry name" value="UreD"/>
    <property type="match status" value="1"/>
</dbReference>
<dbReference type="InterPro" id="IPR002669">
    <property type="entry name" value="UreD"/>
</dbReference>
<dbReference type="PANTHER" id="PTHR33643">
    <property type="entry name" value="UREASE ACCESSORY PROTEIN D"/>
    <property type="match status" value="1"/>
</dbReference>
<dbReference type="PANTHER" id="PTHR33643:SF1">
    <property type="entry name" value="UREASE ACCESSORY PROTEIN D"/>
    <property type="match status" value="1"/>
</dbReference>
<dbReference type="Pfam" id="PF01774">
    <property type="entry name" value="UreD"/>
    <property type="match status" value="1"/>
</dbReference>
<comment type="function">
    <text evidence="1">Required for maturation of urease via the functional incorporation of the urease nickel metallocenter.</text>
</comment>
<comment type="subunit">
    <text evidence="1">UreD, UreF and UreG form a complex that acts as a GTP-hydrolysis-dependent molecular chaperone, activating the urease apoprotein by helping to assemble the nickel containing metallocenter of UreC. The UreE protein probably delivers the nickel.</text>
</comment>
<comment type="subcellular location">
    <subcellularLocation>
        <location evidence="1">Cytoplasm</location>
    </subcellularLocation>
</comment>
<comment type="similarity">
    <text evidence="1">Belongs to the UreD family.</text>
</comment>
<comment type="sequence caution" evidence="2">
    <conflict type="erroneous initiation">
        <sequence resource="EMBL-CDS" id="CAE29105"/>
    </conflict>
</comment>
<feature type="chain" id="PRO_0000340509" description="Urease accessory protein UreD">
    <location>
        <begin position="1"/>
        <end position="279"/>
    </location>
</feature>